<keyword id="KW-0325">Glycoprotein</keyword>
<keyword id="KW-0646">Protease inhibitor</keyword>
<keyword id="KW-1185">Reference proteome</keyword>
<keyword id="KW-0964">Secreted</keyword>
<keyword id="KW-0722">Serine protease inhibitor</keyword>
<keyword id="KW-0732">Signal</keyword>
<accession>Q9JK88</accession>
<accession>Q9D8Z3</accession>
<accession>Q9D955</accession>
<evidence type="ECO:0000250" key="1"/>
<evidence type="ECO:0000255" key="2"/>
<evidence type="ECO:0000305" key="3"/>
<gene>
    <name type="primary">Serpini2</name>
    <name type="synonym">Spi14</name>
</gene>
<dbReference type="EMBL" id="AF251276">
    <property type="protein sequence ID" value="AAF65821.1"/>
    <property type="molecule type" value="mRNA"/>
</dbReference>
<dbReference type="EMBL" id="AK007347">
    <property type="protein sequence ID" value="BAB24976.1"/>
    <property type="molecule type" value="mRNA"/>
</dbReference>
<dbReference type="EMBL" id="AK007510">
    <property type="protein sequence ID" value="BAB25079.1"/>
    <property type="molecule type" value="mRNA"/>
</dbReference>
<dbReference type="CCDS" id="CCDS17413.1"/>
<dbReference type="RefSeq" id="NP_080736.2">
    <property type="nucleotide sequence ID" value="NM_026460.3"/>
</dbReference>
<dbReference type="SMR" id="Q9JK88"/>
<dbReference type="BioGRID" id="212544">
    <property type="interactions" value="4"/>
</dbReference>
<dbReference type="FunCoup" id="Q9JK88">
    <property type="interactions" value="125"/>
</dbReference>
<dbReference type="STRING" id="10090.ENSMUSP00000046943"/>
<dbReference type="MEROPS" id="I04.026"/>
<dbReference type="GlyCosmos" id="Q9JK88">
    <property type="glycosylation" value="1 site, No reported glycans"/>
</dbReference>
<dbReference type="GlyGen" id="Q9JK88">
    <property type="glycosylation" value="1 site"/>
</dbReference>
<dbReference type="PhosphoSitePlus" id="Q9JK88"/>
<dbReference type="PaxDb" id="10090-ENSMUSP00000046943"/>
<dbReference type="ProteomicsDB" id="257349"/>
<dbReference type="Antibodypedia" id="33688">
    <property type="antibodies" value="261 antibodies from 33 providers"/>
</dbReference>
<dbReference type="DNASU" id="67931"/>
<dbReference type="Ensembl" id="ENSMUST00000039047.5">
    <property type="protein sequence ID" value="ENSMUSP00000046943.5"/>
    <property type="gene ID" value="ENSMUSG00000034139.5"/>
</dbReference>
<dbReference type="GeneID" id="67931"/>
<dbReference type="KEGG" id="mmu:67931"/>
<dbReference type="UCSC" id="uc008pna.2">
    <property type="organism name" value="mouse"/>
</dbReference>
<dbReference type="AGR" id="MGI:1915181"/>
<dbReference type="CTD" id="5276"/>
<dbReference type="MGI" id="MGI:1915181">
    <property type="gene designation" value="Serpini2"/>
</dbReference>
<dbReference type="VEuPathDB" id="HostDB:ENSMUSG00000034139"/>
<dbReference type="eggNOG" id="KOG2392">
    <property type="taxonomic scope" value="Eukaryota"/>
</dbReference>
<dbReference type="GeneTree" id="ENSGT00940000161641"/>
<dbReference type="HOGENOM" id="CLU_023330_0_4_1"/>
<dbReference type="InParanoid" id="Q9JK88"/>
<dbReference type="OMA" id="IPMMHLQ"/>
<dbReference type="OrthoDB" id="671595at2759"/>
<dbReference type="PhylomeDB" id="Q9JK88"/>
<dbReference type="TreeFam" id="TF343094"/>
<dbReference type="BioGRID-ORCS" id="67931">
    <property type="hits" value="1 hit in 77 CRISPR screens"/>
</dbReference>
<dbReference type="CD-CODE" id="01CA17F3">
    <property type="entry name" value="Centrosome"/>
</dbReference>
<dbReference type="ChiTaRS" id="Serpini2">
    <property type="organism name" value="mouse"/>
</dbReference>
<dbReference type="PRO" id="PR:Q9JK88"/>
<dbReference type="Proteomes" id="UP000000589">
    <property type="component" value="Chromosome 3"/>
</dbReference>
<dbReference type="RNAct" id="Q9JK88">
    <property type="molecule type" value="protein"/>
</dbReference>
<dbReference type="Bgee" id="ENSMUSG00000034139">
    <property type="expression patterns" value="Expressed in pyloric antrum and 24 other cell types or tissues"/>
</dbReference>
<dbReference type="ExpressionAtlas" id="Q9JK88">
    <property type="expression patterns" value="baseline and differential"/>
</dbReference>
<dbReference type="GO" id="GO:0062023">
    <property type="term" value="C:collagen-containing extracellular matrix"/>
    <property type="evidence" value="ECO:0007005"/>
    <property type="project" value="BHF-UCL"/>
</dbReference>
<dbReference type="GO" id="GO:0005615">
    <property type="term" value="C:extracellular space"/>
    <property type="evidence" value="ECO:0007669"/>
    <property type="project" value="InterPro"/>
</dbReference>
<dbReference type="GO" id="GO:0004867">
    <property type="term" value="F:serine-type endopeptidase inhibitor activity"/>
    <property type="evidence" value="ECO:0007669"/>
    <property type="project" value="UniProtKB-KW"/>
</dbReference>
<dbReference type="CDD" id="cd19576">
    <property type="entry name" value="serpinI2_pancpin"/>
    <property type="match status" value="1"/>
</dbReference>
<dbReference type="FunFam" id="3.30.497.10:FF:000005">
    <property type="entry name" value="serpin I2 isoform X1"/>
    <property type="match status" value="1"/>
</dbReference>
<dbReference type="Gene3D" id="2.30.39.10">
    <property type="entry name" value="Alpha-1-antitrypsin, domain 1"/>
    <property type="match status" value="1"/>
</dbReference>
<dbReference type="Gene3D" id="3.30.497.10">
    <property type="entry name" value="Antithrombin, subunit I, domain 2"/>
    <property type="match status" value="1"/>
</dbReference>
<dbReference type="InterPro" id="IPR023795">
    <property type="entry name" value="Serpin_CS"/>
</dbReference>
<dbReference type="InterPro" id="IPR023796">
    <property type="entry name" value="Serpin_dom"/>
</dbReference>
<dbReference type="InterPro" id="IPR000215">
    <property type="entry name" value="Serpin_fam"/>
</dbReference>
<dbReference type="InterPro" id="IPR036186">
    <property type="entry name" value="Serpin_sf"/>
</dbReference>
<dbReference type="InterPro" id="IPR042178">
    <property type="entry name" value="Serpin_sf_1"/>
</dbReference>
<dbReference type="InterPro" id="IPR042185">
    <property type="entry name" value="Serpin_sf_2"/>
</dbReference>
<dbReference type="PANTHER" id="PTHR11461">
    <property type="entry name" value="SERINE PROTEASE INHIBITOR, SERPIN"/>
    <property type="match status" value="1"/>
</dbReference>
<dbReference type="PANTHER" id="PTHR11461:SF51">
    <property type="entry name" value="SERPIN I2"/>
    <property type="match status" value="1"/>
</dbReference>
<dbReference type="Pfam" id="PF00079">
    <property type="entry name" value="Serpin"/>
    <property type="match status" value="1"/>
</dbReference>
<dbReference type="SMART" id="SM00093">
    <property type="entry name" value="SERPIN"/>
    <property type="match status" value="1"/>
</dbReference>
<dbReference type="SUPFAM" id="SSF56574">
    <property type="entry name" value="Serpins"/>
    <property type="match status" value="1"/>
</dbReference>
<dbReference type="PROSITE" id="PS00284">
    <property type="entry name" value="SERPIN"/>
    <property type="match status" value="1"/>
</dbReference>
<organism>
    <name type="scientific">Mus musculus</name>
    <name type="common">Mouse</name>
    <dbReference type="NCBI Taxonomy" id="10090"/>
    <lineage>
        <taxon>Eukaryota</taxon>
        <taxon>Metazoa</taxon>
        <taxon>Chordata</taxon>
        <taxon>Craniata</taxon>
        <taxon>Vertebrata</taxon>
        <taxon>Euteleostomi</taxon>
        <taxon>Mammalia</taxon>
        <taxon>Eutheria</taxon>
        <taxon>Euarchontoglires</taxon>
        <taxon>Glires</taxon>
        <taxon>Rodentia</taxon>
        <taxon>Myomorpha</taxon>
        <taxon>Muroidea</taxon>
        <taxon>Muridae</taxon>
        <taxon>Murinae</taxon>
        <taxon>Mus</taxon>
        <taxon>Mus</taxon>
    </lineage>
</organism>
<name>SPI2_MOUSE</name>
<feature type="signal peptide" evidence="2">
    <location>
        <begin position="1"/>
        <end position="18"/>
    </location>
</feature>
<feature type="chain" id="PRO_0000032526" description="Serpin I2">
    <location>
        <begin position="19"/>
        <end position="405"/>
    </location>
</feature>
<feature type="site" description="Reactive bond" evidence="1">
    <location>
        <begin position="357"/>
        <end position="358"/>
    </location>
</feature>
<feature type="glycosylation site" description="N-linked (GlcNAc...) asparagine" evidence="2">
    <location>
        <position position="306"/>
    </location>
</feature>
<feature type="sequence conflict" description="In Ref. 2; BAB25079." evidence="3" ref="2">
    <original>I</original>
    <variation>M</variation>
    <location>
        <position position="5"/>
    </location>
</feature>
<feature type="sequence conflict" description="In Ref. 2; BAB24976." evidence="3" ref="2">
    <original>K</original>
    <variation>T</variation>
    <location>
        <position position="195"/>
    </location>
</feature>
<feature type="sequence conflict" description="In Ref. 2; BAB24976." evidence="3" ref="2">
    <original>D</original>
    <variation>S</variation>
    <location>
        <position position="207"/>
    </location>
</feature>
<feature type="sequence conflict" description="In Ref. 2; BAB24976." evidence="3" ref="2">
    <original>KVPMMKA</original>
    <variation>RVPTDEV</variation>
    <location>
        <begin position="212"/>
        <end position="218"/>
    </location>
</feature>
<feature type="sequence conflict" description="In Ref. 2; BAB24976." evidence="3" ref="2">
    <original>F</original>
    <variation>Y</variation>
    <location>
        <position position="246"/>
    </location>
</feature>
<sequence length="405" mass="45776">MNKTILWSFLLFFSGSQTSRATDQKIADFAVDLYKAISLSHKNNIIFSPLGTTMLLGMVQLGAKGKAQQQILKTLRMRGTPAGEEFSVLKSLFSAISKKKQEFTFNLASALYLQEGFIVKETYLHSNKEFFQSATKLVDFLDAKTSAQAISTWVESKTDGKIKNMFSEEEFGPLTRLVLVNAIYFKGDWKQKFRKEDTEMTDFTKKDGSTVKVPMMKALLRAQYGYFSQSSMTCQVLELPYKADEFSLVIILPTEDTSIEEVENQVTAPHVRRWFSELHEEEVEVSLPRFKIEQKLDLKEALYSLNVTEIFSGGCDLSGITDSSEVYVSRVMQKVFFEINEDGSEAAASTGINIPAIMSLTQTQFLANHPFLFILKHIRTESILFMGKVTDPDIQTTKGRDLDSL</sequence>
<protein>
    <recommendedName>
        <fullName>Serpin I2</fullName>
    </recommendedName>
    <alternativeName>
        <fullName>Serine protease inhibitor 14</fullName>
    </alternativeName>
</protein>
<reference key="1">
    <citation type="submission" date="2000-03" db="EMBL/GenBank/DDBJ databases">
        <title>Isolation and characterization of mouse pancreas-specific serpin gene.</title>
        <authorList>
            <person name="Chang W.S."/>
            <person name="Lin S.C."/>
            <person name="Wu C.W."/>
        </authorList>
    </citation>
    <scope>NUCLEOTIDE SEQUENCE [MRNA]</scope>
    <source>
        <tissue>Pancreas</tissue>
    </source>
</reference>
<reference key="2">
    <citation type="journal article" date="2005" name="Science">
        <title>The transcriptional landscape of the mammalian genome.</title>
        <authorList>
            <person name="Carninci P."/>
            <person name="Kasukawa T."/>
            <person name="Katayama S."/>
            <person name="Gough J."/>
            <person name="Frith M.C."/>
            <person name="Maeda N."/>
            <person name="Oyama R."/>
            <person name="Ravasi T."/>
            <person name="Lenhard B."/>
            <person name="Wells C."/>
            <person name="Kodzius R."/>
            <person name="Shimokawa K."/>
            <person name="Bajic V.B."/>
            <person name="Brenner S.E."/>
            <person name="Batalov S."/>
            <person name="Forrest A.R."/>
            <person name="Zavolan M."/>
            <person name="Davis M.J."/>
            <person name="Wilming L.G."/>
            <person name="Aidinis V."/>
            <person name="Allen J.E."/>
            <person name="Ambesi-Impiombato A."/>
            <person name="Apweiler R."/>
            <person name="Aturaliya R.N."/>
            <person name="Bailey T.L."/>
            <person name="Bansal M."/>
            <person name="Baxter L."/>
            <person name="Beisel K.W."/>
            <person name="Bersano T."/>
            <person name="Bono H."/>
            <person name="Chalk A.M."/>
            <person name="Chiu K.P."/>
            <person name="Choudhary V."/>
            <person name="Christoffels A."/>
            <person name="Clutterbuck D.R."/>
            <person name="Crowe M.L."/>
            <person name="Dalla E."/>
            <person name="Dalrymple B.P."/>
            <person name="de Bono B."/>
            <person name="Della Gatta G."/>
            <person name="di Bernardo D."/>
            <person name="Down T."/>
            <person name="Engstrom P."/>
            <person name="Fagiolini M."/>
            <person name="Faulkner G."/>
            <person name="Fletcher C.F."/>
            <person name="Fukushima T."/>
            <person name="Furuno M."/>
            <person name="Futaki S."/>
            <person name="Gariboldi M."/>
            <person name="Georgii-Hemming P."/>
            <person name="Gingeras T.R."/>
            <person name="Gojobori T."/>
            <person name="Green R.E."/>
            <person name="Gustincich S."/>
            <person name="Harbers M."/>
            <person name="Hayashi Y."/>
            <person name="Hensch T.K."/>
            <person name="Hirokawa N."/>
            <person name="Hill D."/>
            <person name="Huminiecki L."/>
            <person name="Iacono M."/>
            <person name="Ikeo K."/>
            <person name="Iwama A."/>
            <person name="Ishikawa T."/>
            <person name="Jakt M."/>
            <person name="Kanapin A."/>
            <person name="Katoh M."/>
            <person name="Kawasawa Y."/>
            <person name="Kelso J."/>
            <person name="Kitamura H."/>
            <person name="Kitano H."/>
            <person name="Kollias G."/>
            <person name="Krishnan S.P."/>
            <person name="Kruger A."/>
            <person name="Kummerfeld S.K."/>
            <person name="Kurochkin I.V."/>
            <person name="Lareau L.F."/>
            <person name="Lazarevic D."/>
            <person name="Lipovich L."/>
            <person name="Liu J."/>
            <person name="Liuni S."/>
            <person name="McWilliam S."/>
            <person name="Madan Babu M."/>
            <person name="Madera M."/>
            <person name="Marchionni L."/>
            <person name="Matsuda H."/>
            <person name="Matsuzawa S."/>
            <person name="Miki H."/>
            <person name="Mignone F."/>
            <person name="Miyake S."/>
            <person name="Morris K."/>
            <person name="Mottagui-Tabar S."/>
            <person name="Mulder N."/>
            <person name="Nakano N."/>
            <person name="Nakauchi H."/>
            <person name="Ng P."/>
            <person name="Nilsson R."/>
            <person name="Nishiguchi S."/>
            <person name="Nishikawa S."/>
            <person name="Nori F."/>
            <person name="Ohara O."/>
            <person name="Okazaki Y."/>
            <person name="Orlando V."/>
            <person name="Pang K.C."/>
            <person name="Pavan W.J."/>
            <person name="Pavesi G."/>
            <person name="Pesole G."/>
            <person name="Petrovsky N."/>
            <person name="Piazza S."/>
            <person name="Reed J."/>
            <person name="Reid J.F."/>
            <person name="Ring B.Z."/>
            <person name="Ringwald M."/>
            <person name="Rost B."/>
            <person name="Ruan Y."/>
            <person name="Salzberg S.L."/>
            <person name="Sandelin A."/>
            <person name="Schneider C."/>
            <person name="Schoenbach C."/>
            <person name="Sekiguchi K."/>
            <person name="Semple C.A."/>
            <person name="Seno S."/>
            <person name="Sessa L."/>
            <person name="Sheng Y."/>
            <person name="Shibata Y."/>
            <person name="Shimada H."/>
            <person name="Shimada K."/>
            <person name="Silva D."/>
            <person name="Sinclair B."/>
            <person name="Sperling S."/>
            <person name="Stupka E."/>
            <person name="Sugiura K."/>
            <person name="Sultana R."/>
            <person name="Takenaka Y."/>
            <person name="Taki K."/>
            <person name="Tammoja K."/>
            <person name="Tan S.L."/>
            <person name="Tang S."/>
            <person name="Taylor M.S."/>
            <person name="Tegner J."/>
            <person name="Teichmann S.A."/>
            <person name="Ueda H.R."/>
            <person name="van Nimwegen E."/>
            <person name="Verardo R."/>
            <person name="Wei C.L."/>
            <person name="Yagi K."/>
            <person name="Yamanishi H."/>
            <person name="Zabarovsky E."/>
            <person name="Zhu S."/>
            <person name="Zimmer A."/>
            <person name="Hide W."/>
            <person name="Bult C."/>
            <person name="Grimmond S.M."/>
            <person name="Teasdale R.D."/>
            <person name="Liu E.T."/>
            <person name="Brusic V."/>
            <person name="Quackenbush J."/>
            <person name="Wahlestedt C."/>
            <person name="Mattick J.S."/>
            <person name="Hume D.A."/>
            <person name="Kai C."/>
            <person name="Sasaki D."/>
            <person name="Tomaru Y."/>
            <person name="Fukuda S."/>
            <person name="Kanamori-Katayama M."/>
            <person name="Suzuki M."/>
            <person name="Aoki J."/>
            <person name="Arakawa T."/>
            <person name="Iida J."/>
            <person name="Imamura K."/>
            <person name="Itoh M."/>
            <person name="Kato T."/>
            <person name="Kawaji H."/>
            <person name="Kawagashira N."/>
            <person name="Kawashima T."/>
            <person name="Kojima M."/>
            <person name="Kondo S."/>
            <person name="Konno H."/>
            <person name="Nakano K."/>
            <person name="Ninomiya N."/>
            <person name="Nishio T."/>
            <person name="Okada M."/>
            <person name="Plessy C."/>
            <person name="Shibata K."/>
            <person name="Shiraki T."/>
            <person name="Suzuki S."/>
            <person name="Tagami M."/>
            <person name="Waki K."/>
            <person name="Watahiki A."/>
            <person name="Okamura-Oho Y."/>
            <person name="Suzuki H."/>
            <person name="Kawai J."/>
            <person name="Hayashizaki Y."/>
        </authorList>
    </citation>
    <scope>NUCLEOTIDE SEQUENCE [LARGE SCALE MRNA]</scope>
    <source>
        <strain>C57BL/6J</strain>
        <tissue>Pancreas</tissue>
    </source>
</reference>
<reference key="3">
    <citation type="journal article" date="2010" name="Cell">
        <title>A tissue-specific atlas of mouse protein phosphorylation and expression.</title>
        <authorList>
            <person name="Huttlin E.L."/>
            <person name="Jedrychowski M.P."/>
            <person name="Elias J.E."/>
            <person name="Goswami T."/>
            <person name="Rad R."/>
            <person name="Beausoleil S.A."/>
            <person name="Villen J."/>
            <person name="Haas W."/>
            <person name="Sowa M.E."/>
            <person name="Gygi S.P."/>
        </authorList>
    </citation>
    <scope>IDENTIFICATION BY MASS SPECTROMETRY [LARGE SCALE ANALYSIS]</scope>
    <source>
        <tissue>Pancreas</tissue>
    </source>
</reference>
<proteinExistence type="evidence at protein level"/>
<comment type="subcellular location">
    <subcellularLocation>
        <location evidence="3">Secreted</location>
    </subcellularLocation>
</comment>
<comment type="tissue specificity">
    <text>Expressed in pancreas.</text>
</comment>
<comment type="similarity">
    <text evidence="3">Belongs to the serpin family.</text>
</comment>